<dbReference type="EC" id="2.1.1.-" evidence="2"/>
<dbReference type="EMBL" id="CU329671">
    <property type="protein sequence ID" value="CAA17895.1"/>
    <property type="molecule type" value="Genomic_DNA"/>
</dbReference>
<dbReference type="EMBL" id="D89210">
    <property type="protein sequence ID" value="BAA13871.1"/>
    <property type="molecule type" value="mRNA"/>
</dbReference>
<dbReference type="PIR" id="T40154">
    <property type="entry name" value="T40154"/>
</dbReference>
<dbReference type="PIR" id="T43014">
    <property type="entry name" value="T43014"/>
</dbReference>
<dbReference type="RefSeq" id="NP_596444.1">
    <property type="nucleotide sequence ID" value="NM_001022363.2"/>
</dbReference>
<dbReference type="SMR" id="P78860"/>
<dbReference type="FunCoup" id="P78860">
    <property type="interactions" value="311"/>
</dbReference>
<dbReference type="STRING" id="284812.P78860"/>
<dbReference type="PaxDb" id="4896-SPBC2G2.15c.1"/>
<dbReference type="EnsemblFungi" id="SPBC2G2.15c.1">
    <property type="protein sequence ID" value="SPBC2G2.15c.1:pep"/>
    <property type="gene ID" value="SPBC2G2.15c"/>
</dbReference>
<dbReference type="GeneID" id="2540444"/>
<dbReference type="KEGG" id="spo:2540444"/>
<dbReference type="PomBase" id="SPBC2G2.15c">
    <property type="gene designation" value="mrm2"/>
</dbReference>
<dbReference type="VEuPathDB" id="FungiDB:SPBC2G2.15c"/>
<dbReference type="eggNOG" id="KOG4589">
    <property type="taxonomic scope" value="Eukaryota"/>
</dbReference>
<dbReference type="HOGENOM" id="CLU_009422_4_0_1"/>
<dbReference type="InParanoid" id="P78860"/>
<dbReference type="OMA" id="HRQTDHL"/>
<dbReference type="PhylomeDB" id="P78860"/>
<dbReference type="PRO" id="PR:P78860"/>
<dbReference type="Proteomes" id="UP000002485">
    <property type="component" value="Chromosome II"/>
</dbReference>
<dbReference type="GO" id="GO:0005739">
    <property type="term" value="C:mitochondrion"/>
    <property type="evidence" value="ECO:0007005"/>
    <property type="project" value="PomBase"/>
</dbReference>
<dbReference type="GO" id="GO:0008650">
    <property type="term" value="F:rRNA (uridine-2'-O-)-methyltransferase activity"/>
    <property type="evidence" value="ECO:0000318"/>
    <property type="project" value="GO_Central"/>
</dbReference>
<dbReference type="GO" id="GO:1902775">
    <property type="term" value="P:mitochondrial large ribosomal subunit assembly"/>
    <property type="evidence" value="ECO:0000266"/>
    <property type="project" value="PomBase"/>
</dbReference>
<dbReference type="GO" id="GO:0001510">
    <property type="term" value="P:RNA methylation"/>
    <property type="evidence" value="ECO:0000318"/>
    <property type="project" value="GO_Central"/>
</dbReference>
<dbReference type="FunFam" id="3.40.50.150:FF:000005">
    <property type="entry name" value="Ribosomal RNA large subunit methyltransferase E"/>
    <property type="match status" value="1"/>
</dbReference>
<dbReference type="Gene3D" id="3.40.50.150">
    <property type="entry name" value="Vaccinia Virus protein VP39"/>
    <property type="match status" value="1"/>
</dbReference>
<dbReference type="HAMAP" id="MF_01547">
    <property type="entry name" value="RNA_methyltr_E"/>
    <property type="match status" value="1"/>
</dbReference>
<dbReference type="InterPro" id="IPR050082">
    <property type="entry name" value="RNA_methyltr_RlmE"/>
</dbReference>
<dbReference type="InterPro" id="IPR002877">
    <property type="entry name" value="RNA_MeTrfase_FtsJ_dom"/>
</dbReference>
<dbReference type="InterPro" id="IPR015507">
    <property type="entry name" value="rRNA-MeTfrase_E"/>
</dbReference>
<dbReference type="InterPro" id="IPR029063">
    <property type="entry name" value="SAM-dependent_MTases_sf"/>
</dbReference>
<dbReference type="PANTHER" id="PTHR10920">
    <property type="entry name" value="RIBOSOMAL RNA METHYLTRANSFERASE"/>
    <property type="match status" value="1"/>
</dbReference>
<dbReference type="PANTHER" id="PTHR10920:SF18">
    <property type="entry name" value="RRNA METHYLTRANSFERASE 2, MITOCHONDRIAL"/>
    <property type="match status" value="1"/>
</dbReference>
<dbReference type="Pfam" id="PF01728">
    <property type="entry name" value="FtsJ"/>
    <property type="match status" value="1"/>
</dbReference>
<dbReference type="PIRSF" id="PIRSF005461">
    <property type="entry name" value="23S_rRNA_mtase"/>
    <property type="match status" value="1"/>
</dbReference>
<dbReference type="SUPFAM" id="SSF53335">
    <property type="entry name" value="S-adenosyl-L-methionine-dependent methyltransferases"/>
    <property type="match status" value="1"/>
</dbReference>
<proteinExistence type="evidence at transcript level"/>
<protein>
    <recommendedName>
        <fullName evidence="2">rRNA methyltransferase 2, mitochondrial</fullName>
        <ecNumber evidence="2">2.1.1.-</ecNumber>
    </recommendedName>
    <alternativeName>
        <fullName evidence="2">21S rRNA (uridine-2'-O)-methyltransferase</fullName>
    </alternativeName>
</protein>
<reference key="1">
    <citation type="journal article" date="2002" name="Nature">
        <title>The genome sequence of Schizosaccharomyces pombe.</title>
        <authorList>
            <person name="Wood V."/>
            <person name="Gwilliam R."/>
            <person name="Rajandream M.A."/>
            <person name="Lyne M.H."/>
            <person name="Lyne R."/>
            <person name="Stewart A."/>
            <person name="Sgouros J.G."/>
            <person name="Peat N."/>
            <person name="Hayles J."/>
            <person name="Baker S.G."/>
            <person name="Basham D."/>
            <person name="Bowman S."/>
            <person name="Brooks K."/>
            <person name="Brown D."/>
            <person name="Brown S."/>
            <person name="Chillingworth T."/>
            <person name="Churcher C.M."/>
            <person name="Collins M."/>
            <person name="Connor R."/>
            <person name="Cronin A."/>
            <person name="Davis P."/>
            <person name="Feltwell T."/>
            <person name="Fraser A."/>
            <person name="Gentles S."/>
            <person name="Goble A."/>
            <person name="Hamlin N."/>
            <person name="Harris D.E."/>
            <person name="Hidalgo J."/>
            <person name="Hodgson G."/>
            <person name="Holroyd S."/>
            <person name="Hornsby T."/>
            <person name="Howarth S."/>
            <person name="Huckle E.J."/>
            <person name="Hunt S."/>
            <person name="Jagels K."/>
            <person name="James K.D."/>
            <person name="Jones L."/>
            <person name="Jones M."/>
            <person name="Leather S."/>
            <person name="McDonald S."/>
            <person name="McLean J."/>
            <person name="Mooney P."/>
            <person name="Moule S."/>
            <person name="Mungall K.L."/>
            <person name="Murphy L.D."/>
            <person name="Niblett D."/>
            <person name="Odell C."/>
            <person name="Oliver K."/>
            <person name="O'Neil S."/>
            <person name="Pearson D."/>
            <person name="Quail M.A."/>
            <person name="Rabbinowitsch E."/>
            <person name="Rutherford K.M."/>
            <person name="Rutter S."/>
            <person name="Saunders D."/>
            <person name="Seeger K."/>
            <person name="Sharp S."/>
            <person name="Skelton J."/>
            <person name="Simmonds M.N."/>
            <person name="Squares R."/>
            <person name="Squares S."/>
            <person name="Stevens K."/>
            <person name="Taylor K."/>
            <person name="Taylor R.G."/>
            <person name="Tivey A."/>
            <person name="Walsh S.V."/>
            <person name="Warren T."/>
            <person name="Whitehead S."/>
            <person name="Woodward J.R."/>
            <person name="Volckaert G."/>
            <person name="Aert R."/>
            <person name="Robben J."/>
            <person name="Grymonprez B."/>
            <person name="Weltjens I."/>
            <person name="Vanstreels E."/>
            <person name="Rieger M."/>
            <person name="Schaefer M."/>
            <person name="Mueller-Auer S."/>
            <person name="Gabel C."/>
            <person name="Fuchs M."/>
            <person name="Duesterhoeft A."/>
            <person name="Fritzc C."/>
            <person name="Holzer E."/>
            <person name="Moestl D."/>
            <person name="Hilbert H."/>
            <person name="Borzym K."/>
            <person name="Langer I."/>
            <person name="Beck A."/>
            <person name="Lehrach H."/>
            <person name="Reinhardt R."/>
            <person name="Pohl T.M."/>
            <person name="Eger P."/>
            <person name="Zimmermann W."/>
            <person name="Wedler H."/>
            <person name="Wambutt R."/>
            <person name="Purnelle B."/>
            <person name="Goffeau A."/>
            <person name="Cadieu E."/>
            <person name="Dreano S."/>
            <person name="Gloux S."/>
            <person name="Lelaure V."/>
            <person name="Mottier S."/>
            <person name="Galibert F."/>
            <person name="Aves S.J."/>
            <person name="Xiang Z."/>
            <person name="Hunt C."/>
            <person name="Moore K."/>
            <person name="Hurst S.M."/>
            <person name="Lucas M."/>
            <person name="Rochet M."/>
            <person name="Gaillardin C."/>
            <person name="Tallada V.A."/>
            <person name="Garzon A."/>
            <person name="Thode G."/>
            <person name="Daga R.R."/>
            <person name="Cruzado L."/>
            <person name="Jimenez J."/>
            <person name="Sanchez M."/>
            <person name="del Rey F."/>
            <person name="Benito J."/>
            <person name="Dominguez A."/>
            <person name="Revuelta J.L."/>
            <person name="Moreno S."/>
            <person name="Armstrong J."/>
            <person name="Forsburg S.L."/>
            <person name="Cerutti L."/>
            <person name="Lowe T."/>
            <person name="McCombie W.R."/>
            <person name="Paulsen I."/>
            <person name="Potashkin J."/>
            <person name="Shpakovski G.V."/>
            <person name="Ussery D."/>
            <person name="Barrell B.G."/>
            <person name="Nurse P."/>
        </authorList>
    </citation>
    <scope>NUCLEOTIDE SEQUENCE [LARGE SCALE GENOMIC DNA]</scope>
    <source>
        <strain>972 / ATCC 24843</strain>
    </source>
</reference>
<reference key="2">
    <citation type="journal article" date="1997" name="DNA Res.">
        <title>Identification of open reading frames in Schizosaccharomyces pombe cDNAs.</title>
        <authorList>
            <person name="Yoshioka S."/>
            <person name="Kato K."/>
            <person name="Nakai K."/>
            <person name="Okayama H."/>
            <person name="Nojima H."/>
        </authorList>
    </citation>
    <scope>NUCLEOTIDE SEQUENCE [LARGE SCALE MRNA] OF 46-218</scope>
    <source>
        <strain>PR745</strain>
    </source>
</reference>
<reference key="3">
    <citation type="journal article" date="2006" name="Nat. Biotechnol.">
        <title>ORFeome cloning and global analysis of protein localization in the fission yeast Schizosaccharomyces pombe.</title>
        <authorList>
            <person name="Matsuyama A."/>
            <person name="Arai R."/>
            <person name="Yashiroda Y."/>
            <person name="Shirai A."/>
            <person name="Kamata A."/>
            <person name="Sekido S."/>
            <person name="Kobayashi Y."/>
            <person name="Hashimoto A."/>
            <person name="Hamamoto M."/>
            <person name="Hiraoka Y."/>
            <person name="Horinouchi S."/>
            <person name="Yoshida M."/>
        </authorList>
    </citation>
    <scope>SUBCELLULAR LOCATION [LARGE SCALE ANALYSIS]</scope>
</reference>
<comment type="function">
    <text evidence="2">S-adenosyl-L-methionine-dependent 2'-O-ribose methyltransferase that catalyzes the formation of the 2'-O-methyluridine corresponding to position 2791 in S.cerevisiae 21S mitochondrial large subunit ribosomal RNA (mtLSU rRNA), a universally conserved modification in the peptidyl transferase domain of the mtLSU rRNA.</text>
</comment>
<comment type="catalytic activity">
    <reaction evidence="2">
        <text>a uridine in 21S rRNA + S-adenosyl-L-methionine = a 2'-O-methyluridine in 21S rRNA + S-adenosyl-L-homocysteine + H(+)</text>
        <dbReference type="Rhea" id="RHEA:47760"/>
        <dbReference type="Rhea" id="RHEA-COMP:11901"/>
        <dbReference type="Rhea" id="RHEA-COMP:11902"/>
        <dbReference type="ChEBI" id="CHEBI:15378"/>
        <dbReference type="ChEBI" id="CHEBI:57856"/>
        <dbReference type="ChEBI" id="CHEBI:59789"/>
        <dbReference type="ChEBI" id="CHEBI:65315"/>
        <dbReference type="ChEBI" id="CHEBI:74478"/>
    </reaction>
</comment>
<comment type="subcellular location">
    <subcellularLocation>
        <location evidence="5">Mitochondrion</location>
    </subcellularLocation>
</comment>
<comment type="similarity">
    <text evidence="6">Belongs to the class I-like SAM-binding methyltransferase superfamily. RNA methyltransferase RlmE family.</text>
</comment>
<evidence type="ECO:0000250" key="1">
    <source>
        <dbReference type="UniProtKB" id="P0C0R7"/>
    </source>
</evidence>
<evidence type="ECO:0000250" key="2">
    <source>
        <dbReference type="UniProtKB" id="P53123"/>
    </source>
</evidence>
<evidence type="ECO:0000250" key="3">
    <source>
        <dbReference type="UniProtKB" id="Q9UI43"/>
    </source>
</evidence>
<evidence type="ECO:0000255" key="4"/>
<evidence type="ECO:0000269" key="5">
    <source>
    </source>
</evidence>
<evidence type="ECO:0000305" key="6"/>
<evidence type="ECO:0000312" key="7">
    <source>
        <dbReference type="PomBase" id="SPBC2G2.15c"/>
    </source>
</evidence>
<gene>
    <name evidence="2" type="primary">mrm2</name>
    <name evidence="7" type="ORF">SPBC2G2.15c</name>
</gene>
<organism>
    <name type="scientific">Schizosaccharomyces pombe (strain 972 / ATCC 24843)</name>
    <name type="common">Fission yeast</name>
    <dbReference type="NCBI Taxonomy" id="284812"/>
    <lineage>
        <taxon>Eukaryota</taxon>
        <taxon>Fungi</taxon>
        <taxon>Dikarya</taxon>
        <taxon>Ascomycota</taxon>
        <taxon>Taphrinomycotina</taxon>
        <taxon>Schizosaccharomycetes</taxon>
        <taxon>Schizosaccharomycetales</taxon>
        <taxon>Schizosaccharomycetaceae</taxon>
        <taxon>Schizosaccharomyces</taxon>
    </lineage>
</organism>
<feature type="transit peptide" description="Mitochondrion" evidence="4">
    <location>
        <begin position="1"/>
        <end status="unknown"/>
    </location>
</feature>
<feature type="chain" id="PRO_0000155590" description="rRNA methyltransferase 2, mitochondrial">
    <location>
        <begin status="unknown"/>
        <end position="218"/>
    </location>
</feature>
<feature type="active site" description="Proton acceptor" evidence="1">
    <location>
        <position position="173"/>
    </location>
</feature>
<feature type="binding site" evidence="3">
    <location>
        <begin position="59"/>
        <end position="62"/>
    </location>
    <ligand>
        <name>S-adenosyl-L-methionine</name>
        <dbReference type="ChEBI" id="CHEBI:59789"/>
    </ligand>
</feature>
<feature type="binding site" evidence="3">
    <location>
        <position position="80"/>
    </location>
    <ligand>
        <name>S-adenosyl-L-methionine</name>
        <dbReference type="ChEBI" id="CHEBI:59789"/>
    </ligand>
</feature>
<feature type="binding site" evidence="3">
    <location>
        <begin position="96"/>
        <end position="97"/>
    </location>
    <ligand>
        <name>S-adenosyl-L-methionine</name>
        <dbReference type="ChEBI" id="CHEBI:59789"/>
    </ligand>
</feature>
<feature type="binding site" evidence="3">
    <location>
        <position position="133"/>
    </location>
    <ligand>
        <name>S-adenosyl-L-methionine</name>
        <dbReference type="ChEBI" id="CHEBI:59789"/>
    </ligand>
</feature>
<accession>P78860</accession>
<name>MRM2_SCHPO</name>
<sequence>MFGSKTLFSWAAKRSKDFYRKKSKIDNFRSRAAYKLIELNSKYRFINKEDVVIDVGFAPGSWSQVAKKLVGNKGKVIGIDIQHIAPPEGVLPIYGDIRDPNTLTKLFEALRLLHEPNTNDSIDCRVVDAVISDMLHKATGIRIRDHALSMELCASALHVALTFLKSNGSFICKFYMGDEDADLQNLLKSHFRFVQVMKPKASLKESREAYFVCLERKP</sequence>
<keyword id="KW-0489">Methyltransferase</keyword>
<keyword id="KW-0496">Mitochondrion</keyword>
<keyword id="KW-1185">Reference proteome</keyword>
<keyword id="KW-0698">rRNA processing</keyword>
<keyword id="KW-0949">S-adenosyl-L-methionine</keyword>
<keyword id="KW-0808">Transferase</keyword>
<keyword id="KW-0809">Transit peptide</keyword>